<organism>
    <name type="scientific">Bos taurus</name>
    <name type="common">Bovine</name>
    <dbReference type="NCBI Taxonomy" id="9913"/>
    <lineage>
        <taxon>Eukaryota</taxon>
        <taxon>Metazoa</taxon>
        <taxon>Chordata</taxon>
        <taxon>Craniata</taxon>
        <taxon>Vertebrata</taxon>
        <taxon>Euteleostomi</taxon>
        <taxon>Mammalia</taxon>
        <taxon>Eutheria</taxon>
        <taxon>Laurasiatheria</taxon>
        <taxon>Artiodactyla</taxon>
        <taxon>Ruminantia</taxon>
        <taxon>Pecora</taxon>
        <taxon>Bovidae</taxon>
        <taxon>Bovinae</taxon>
        <taxon>Bos</taxon>
    </lineage>
</organism>
<comment type="function">
    <text evidence="2">Catalyzes the interconversion of methylthioribose-1-phosphate (MTR-1-P) into methylthioribulose-1-phosphate (MTRu-1-P).</text>
</comment>
<comment type="catalytic activity">
    <reaction evidence="2">
        <text>5-(methylsulfanyl)-alpha-D-ribose 1-phosphate = 5-(methylsulfanyl)-D-ribulose 1-phosphate</text>
        <dbReference type="Rhea" id="RHEA:19989"/>
        <dbReference type="ChEBI" id="CHEBI:58533"/>
        <dbReference type="ChEBI" id="CHEBI:58548"/>
        <dbReference type="EC" id="5.3.1.23"/>
    </reaction>
</comment>
<comment type="pathway">
    <text evidence="2">Amino-acid biosynthesis; L-methionine biosynthesis via salvage pathway; L-methionine from S-methyl-5-thio-alpha-D-ribose 1-phosphate: step 1/6.</text>
</comment>
<comment type="subcellular location">
    <subcellularLocation>
        <location evidence="2">Cytoplasm</location>
    </subcellularLocation>
    <subcellularLocation>
        <location evidence="2">Nucleus</location>
    </subcellularLocation>
</comment>
<comment type="similarity">
    <text evidence="2">Belongs to the eIF-2B alpha/beta/delta subunits family. MtnA subfamily.</text>
</comment>
<feature type="chain" id="PRO_0000317324" description="Methylthioribose-1-phosphate isomerase">
    <location>
        <begin position="1"/>
        <end position="358"/>
    </location>
</feature>
<feature type="active site" description="Proton donor" evidence="2">
    <location>
        <position position="248"/>
    </location>
</feature>
<feature type="site" description="Transition state stabilizer" evidence="2">
    <location>
        <position position="168"/>
    </location>
</feature>
<feature type="modified residue" description="N-acetylmethionine" evidence="1">
    <location>
        <position position="1"/>
    </location>
</feature>
<proteinExistence type="evidence at transcript level"/>
<name>MTNA_BOVIN</name>
<reference key="1">
    <citation type="submission" date="2005-12" db="EMBL/GenBank/DDBJ databases">
        <authorList>
            <consortium name="NIH - Mammalian Gene Collection (MGC) project"/>
        </authorList>
    </citation>
    <scope>NUCLEOTIDE SEQUENCE [LARGE SCALE MRNA]</scope>
    <source>
        <strain>Crossbred X Angus</strain>
        <tissue>Liver</tissue>
    </source>
</reference>
<dbReference type="EC" id="5.3.1.23" evidence="2"/>
<dbReference type="EMBL" id="BC111154">
    <property type="protein sequence ID" value="AAI11155.1"/>
    <property type="molecule type" value="mRNA"/>
</dbReference>
<dbReference type="RefSeq" id="NP_001039852.1">
    <property type="nucleotide sequence ID" value="NM_001046387.1"/>
</dbReference>
<dbReference type="SMR" id="Q2NL31"/>
<dbReference type="FunCoup" id="Q2NL31">
    <property type="interactions" value="2194"/>
</dbReference>
<dbReference type="STRING" id="9913.ENSBTAP00000003273"/>
<dbReference type="PaxDb" id="9913-ENSBTAP00000003273"/>
<dbReference type="GeneID" id="534734"/>
<dbReference type="KEGG" id="bta:534734"/>
<dbReference type="CTD" id="84245"/>
<dbReference type="eggNOG" id="KOG1468">
    <property type="taxonomic scope" value="Eukaryota"/>
</dbReference>
<dbReference type="HOGENOM" id="CLU_016218_1_3_1"/>
<dbReference type="InParanoid" id="Q2NL31"/>
<dbReference type="OrthoDB" id="2461at2759"/>
<dbReference type="TreeFam" id="TF300852"/>
<dbReference type="UniPathway" id="UPA00904">
    <property type="reaction ID" value="UER00874"/>
</dbReference>
<dbReference type="Proteomes" id="UP000009136">
    <property type="component" value="Unplaced"/>
</dbReference>
<dbReference type="GO" id="GO:0005737">
    <property type="term" value="C:cytoplasm"/>
    <property type="evidence" value="ECO:0007669"/>
    <property type="project" value="UniProtKB-SubCell"/>
</dbReference>
<dbReference type="GO" id="GO:0005634">
    <property type="term" value="C:nucleus"/>
    <property type="evidence" value="ECO:0007669"/>
    <property type="project" value="UniProtKB-SubCell"/>
</dbReference>
<dbReference type="GO" id="GO:0046523">
    <property type="term" value="F:S-methyl-5-thioribose-1-phosphate isomerase activity"/>
    <property type="evidence" value="ECO:0000318"/>
    <property type="project" value="GO_Central"/>
</dbReference>
<dbReference type="GO" id="GO:0019509">
    <property type="term" value="P:L-methionine salvage from methylthioadenosine"/>
    <property type="evidence" value="ECO:0000318"/>
    <property type="project" value="GO_Central"/>
</dbReference>
<dbReference type="FunFam" id="1.20.120.420:FF:000001">
    <property type="entry name" value="Methylthioribose-1-phosphate isomerase"/>
    <property type="match status" value="1"/>
</dbReference>
<dbReference type="FunFam" id="3.40.50.10470:FF:000003">
    <property type="entry name" value="Methylthioribose-1-phosphate isomerase"/>
    <property type="match status" value="1"/>
</dbReference>
<dbReference type="Gene3D" id="1.20.120.420">
    <property type="entry name" value="translation initiation factor eif-2b, domain 1"/>
    <property type="match status" value="1"/>
</dbReference>
<dbReference type="Gene3D" id="3.40.50.10470">
    <property type="entry name" value="Translation initiation factor eif-2b, domain 2"/>
    <property type="match status" value="1"/>
</dbReference>
<dbReference type="HAMAP" id="MF_01678">
    <property type="entry name" value="Salvage_MtnA"/>
    <property type="match status" value="1"/>
</dbReference>
<dbReference type="InterPro" id="IPR000649">
    <property type="entry name" value="IF-2B-related"/>
</dbReference>
<dbReference type="InterPro" id="IPR005251">
    <property type="entry name" value="IF-M1Pi"/>
</dbReference>
<dbReference type="InterPro" id="IPR042529">
    <property type="entry name" value="IF_2B-like_C"/>
</dbReference>
<dbReference type="InterPro" id="IPR011559">
    <property type="entry name" value="Initiation_fac_2B_a/b/d"/>
</dbReference>
<dbReference type="InterPro" id="IPR027363">
    <property type="entry name" value="M1Pi_N"/>
</dbReference>
<dbReference type="InterPro" id="IPR037171">
    <property type="entry name" value="NagB/RpiA_transferase-like"/>
</dbReference>
<dbReference type="NCBIfam" id="TIGR00524">
    <property type="entry name" value="eIF-2B_rel"/>
    <property type="match status" value="1"/>
</dbReference>
<dbReference type="NCBIfam" id="NF004326">
    <property type="entry name" value="PRK05720.1"/>
    <property type="match status" value="1"/>
</dbReference>
<dbReference type="NCBIfam" id="TIGR00512">
    <property type="entry name" value="salvage_mtnA"/>
    <property type="match status" value="1"/>
</dbReference>
<dbReference type="PANTHER" id="PTHR43475">
    <property type="entry name" value="METHYLTHIORIBOSE-1-PHOSPHATE ISOMERASE"/>
    <property type="match status" value="1"/>
</dbReference>
<dbReference type="PANTHER" id="PTHR43475:SF1">
    <property type="entry name" value="METHYLTHIORIBOSE-1-PHOSPHATE ISOMERASE"/>
    <property type="match status" value="1"/>
</dbReference>
<dbReference type="Pfam" id="PF01008">
    <property type="entry name" value="IF-2B"/>
    <property type="match status" value="1"/>
</dbReference>
<dbReference type="SUPFAM" id="SSF100950">
    <property type="entry name" value="NagB/RpiA/CoA transferase-like"/>
    <property type="match status" value="1"/>
</dbReference>
<evidence type="ECO:0000250" key="1">
    <source>
        <dbReference type="UniProtKB" id="Q9BV20"/>
    </source>
</evidence>
<evidence type="ECO:0000255" key="2">
    <source>
        <dbReference type="HAMAP-Rule" id="MF_03119"/>
    </source>
</evidence>
<gene>
    <name evidence="2" type="primary">MRI1</name>
</gene>
<protein>
    <recommendedName>
        <fullName evidence="2">Methylthioribose-1-phosphate isomerase</fullName>
        <shortName evidence="2">M1Pi</shortName>
        <shortName evidence="2">MTR-1-P isomerase</shortName>
        <ecNumber evidence="2">5.3.1.23</ecNumber>
    </recommendedName>
    <alternativeName>
        <fullName evidence="2">S-methyl-5-thioribose-1-phosphate isomerase</fullName>
    </alternativeName>
    <alternativeName>
        <fullName evidence="2">Translation initiation factor eIF-2B subunit alpha/beta/delta-like protein</fullName>
    </alternativeName>
</protein>
<accession>Q2NL31</accession>
<keyword id="KW-0007">Acetylation</keyword>
<keyword id="KW-0028">Amino-acid biosynthesis</keyword>
<keyword id="KW-0963">Cytoplasm</keyword>
<keyword id="KW-0413">Isomerase</keyword>
<keyword id="KW-0486">Methionine biosynthesis</keyword>
<keyword id="KW-0539">Nucleus</keyword>
<keyword id="KW-1185">Reference proteome</keyword>
<sequence>MTLEAIRYSRGSLQILDQLLLPQQSRYEAVGSVRQAWEAIRAMKVRGAPAIALVGCLSLAVELQAGAGGPGLAALVAFVQDALSFLVTARPTAVNMARAARDLADLAAQEAEREGATEEAVRERVICWAEDMLDKDLRDNRSIGDLGAHHLLKRAAPQGGKVTVLTHCNTGALATAGYGTALGVIRSLHNLGRLEHAFCTETRPYNQGARLTAFELVYEQIPATLIADSMAAAAMAHQGVSAVVVGADRVVANGDTANKVGTYQLAIAAKHHGIPFYVAAPSSSCDLRLETGREIVIEERPDQELTDVNGVRIAAPGIGVWNPAFDVTPHDLITGGIITELGVFAPEELQAALSATIS</sequence>